<organism>
    <name type="scientific">Secale cereale</name>
    <name type="common">Rye</name>
    <dbReference type="NCBI Taxonomy" id="4550"/>
    <lineage>
        <taxon>Eukaryota</taxon>
        <taxon>Viridiplantae</taxon>
        <taxon>Streptophyta</taxon>
        <taxon>Embryophyta</taxon>
        <taxon>Tracheophyta</taxon>
        <taxon>Spermatophyta</taxon>
        <taxon>Magnoliopsida</taxon>
        <taxon>Liliopsida</taxon>
        <taxon>Poales</taxon>
        <taxon>Poaceae</taxon>
        <taxon>BOP clade</taxon>
        <taxon>Pooideae</taxon>
        <taxon>Triticodae</taxon>
        <taxon>Triticeae</taxon>
        <taxon>Hordeinae</taxon>
        <taxon>Secale</taxon>
    </lineage>
</organism>
<proteinExistence type="evidence at protein level"/>
<comment type="function">
    <text evidence="1">One of the components of the core complex of photosystem II (PSII). It binds chlorophyll and helps catalyze the primary light-induced photochemical processes of PSII. PSII is a light-driven water:plastoquinone oxidoreductase, using light energy to abstract electrons from H(2)O, generating O(2) and a proton gradient subsequently used for ATP formation.</text>
</comment>
<comment type="cofactor">
    <text evidence="1">Binds multiple chlorophylls and provides some of the ligands for the Ca-4Mn-5O cluster of the oxygen-evolving complex. It may also provide a ligand for a Cl- that is required for oxygen evolution. PSII binds additional chlorophylls, carotenoids and specific lipids.</text>
</comment>
<comment type="subunit">
    <text evidence="1">PSII is composed of 1 copy each of membrane proteins PsbA, PsbB, PsbC, PsbD, PsbE, PsbF, PsbH, PsbI, PsbJ, PsbK, PsbL, PsbM, PsbT, PsbX, PsbY, PsbZ, Psb30/Ycf12, at least 3 peripheral proteins of the oxygen-evolving complex and a large number of cofactors. It forms dimeric complexes.</text>
</comment>
<comment type="subcellular location">
    <subcellularLocation>
        <location evidence="1 2">Plastid</location>
        <location evidence="1 2">Chloroplast thylakoid membrane</location>
        <topology evidence="1 3">Multi-pass membrane protein</topology>
    </subcellularLocation>
</comment>
<comment type="PTM">
    <text evidence="2">Phosphorylated on threonine residue(s); phosphorylation increases with increasing light levels.</text>
</comment>
<comment type="similarity">
    <text evidence="1">Belongs to the PsbB/PsbC family. PsbC subfamily.</text>
</comment>
<comment type="sequence caution" evidence="3">
    <conflict type="erroneous initiation">
        <sequence resource="EMBL-CDS" id="CAC35458"/>
    </conflict>
    <text>Truncated N-terminus.</text>
</comment>
<reference key="1">
    <citation type="journal article" date="1989" name="Nucleic Acids Res.">
        <title>Nucleotide sequence of rye chloroplast DNA fragment, comprising psbD, psbC and trnS genes.</title>
        <authorList>
            <person name="Bukharov A.A."/>
            <person name="Kolosov V.L."/>
            <person name="Klezovich O.N."/>
            <person name="Zolotarev A.S."/>
        </authorList>
    </citation>
    <scope>NUCLEOTIDE SEQUENCE [GENOMIC DNA]</scope>
</reference>
<reference key="2">
    <citation type="journal article" date="1998" name="FEBS Lett.">
        <title>Thylakoid protein phosphorylation in evolutionally divergent species with oxygenic photosynthesis.</title>
        <authorList>
            <person name="Pursiheimo S."/>
            <person name="Rintamaeki E."/>
            <person name="Baena-Gonzalez E."/>
            <person name="Aro E.-M."/>
        </authorList>
    </citation>
    <scope>PHOSPHORYLATION</scope>
    <scope>SUBCELLULAR LOCATION</scope>
</reference>
<reference key="3">
    <citation type="journal article" date="1990" name="Bioorg. Khim.">
        <title>Rye photosystem II. Nucleotide sequence of the psbC gene coding 43-kDa chlorophyll(a)-binding proteins.</title>
        <authorList>
            <person name="Bukharov A.A."/>
            <person name="Kolosov V.L."/>
            <person name="Zolotarev A.S."/>
        </authorList>
    </citation>
    <scope>NUCLEOTIDE SEQUENCE [GENOMIC DNA]</scope>
</reference>
<protein>
    <recommendedName>
        <fullName evidence="1">Photosystem II CP43 reaction center protein</fullName>
    </recommendedName>
    <alternativeName>
        <fullName evidence="1">PSII 43 kDa protein</fullName>
    </alternativeName>
    <alternativeName>
        <fullName evidence="1">Protein CP-43</fullName>
    </alternativeName>
</protein>
<geneLocation type="chloroplast"/>
<keyword id="KW-0007">Acetylation</keyword>
<keyword id="KW-0148">Chlorophyll</keyword>
<keyword id="KW-0150">Chloroplast</keyword>
<keyword id="KW-0157">Chromophore</keyword>
<keyword id="KW-0464">Manganese</keyword>
<keyword id="KW-0472">Membrane</keyword>
<keyword id="KW-0479">Metal-binding</keyword>
<keyword id="KW-0597">Phosphoprotein</keyword>
<keyword id="KW-0602">Photosynthesis</keyword>
<keyword id="KW-0604">Photosystem II</keyword>
<keyword id="KW-0934">Plastid</keyword>
<keyword id="KW-0793">Thylakoid</keyword>
<keyword id="KW-0812">Transmembrane</keyword>
<keyword id="KW-1133">Transmembrane helix</keyword>
<name>PSBC_SECCE</name>
<feature type="propeptide" id="PRO_0000431207" evidence="1">
    <location>
        <begin position="1"/>
        <end position="14"/>
    </location>
</feature>
<feature type="chain" id="PRO_0000077527" description="Photosystem II CP43 reaction center protein" evidence="1">
    <location>
        <begin position="15"/>
        <end position="473"/>
    </location>
</feature>
<feature type="transmembrane region" description="Helical" evidence="1">
    <location>
        <begin position="69"/>
        <end position="93"/>
    </location>
</feature>
<feature type="transmembrane region" description="Helical" evidence="1">
    <location>
        <begin position="134"/>
        <end position="155"/>
    </location>
</feature>
<feature type="transmembrane region" description="Helical" evidence="1">
    <location>
        <begin position="178"/>
        <end position="200"/>
    </location>
</feature>
<feature type="transmembrane region" description="Helical" evidence="1">
    <location>
        <begin position="255"/>
        <end position="275"/>
    </location>
</feature>
<feature type="transmembrane region" description="Helical" evidence="1">
    <location>
        <begin position="291"/>
        <end position="312"/>
    </location>
</feature>
<feature type="transmembrane region" description="Helical" evidence="1">
    <location>
        <begin position="447"/>
        <end position="471"/>
    </location>
</feature>
<feature type="binding site" evidence="1">
    <location>
        <position position="367"/>
    </location>
    <ligand>
        <name>[CaMn4O5] cluster</name>
        <dbReference type="ChEBI" id="CHEBI:189552"/>
    </ligand>
</feature>
<feature type="modified residue" description="N-acetylthreonine" evidence="1">
    <location>
        <position position="15"/>
    </location>
</feature>
<feature type="modified residue" description="Phosphothreonine" evidence="1">
    <location>
        <position position="15"/>
    </location>
</feature>
<dbReference type="EMBL" id="X13366">
    <property type="protein sequence ID" value="CAA31744.1"/>
    <property type="molecule type" value="Genomic_DNA"/>
</dbReference>
<dbReference type="EMBL" id="X13366">
    <property type="protein sequence ID" value="CAC35458.1"/>
    <property type="status" value="ALT_INIT"/>
    <property type="molecule type" value="Genomic_DNA"/>
</dbReference>
<dbReference type="PIR" id="S03436">
    <property type="entry name" value="S03436"/>
</dbReference>
<dbReference type="SMR" id="P10804"/>
<dbReference type="GO" id="GO:0009535">
    <property type="term" value="C:chloroplast thylakoid membrane"/>
    <property type="evidence" value="ECO:0007669"/>
    <property type="project" value="UniProtKB-SubCell"/>
</dbReference>
<dbReference type="GO" id="GO:0009523">
    <property type="term" value="C:photosystem II"/>
    <property type="evidence" value="ECO:0007669"/>
    <property type="project" value="UniProtKB-KW"/>
</dbReference>
<dbReference type="GO" id="GO:0016168">
    <property type="term" value="F:chlorophyll binding"/>
    <property type="evidence" value="ECO:0007669"/>
    <property type="project" value="UniProtKB-UniRule"/>
</dbReference>
<dbReference type="GO" id="GO:0045156">
    <property type="term" value="F:electron transporter, transferring electrons within the cyclic electron transport pathway of photosynthesis activity"/>
    <property type="evidence" value="ECO:0007669"/>
    <property type="project" value="InterPro"/>
</dbReference>
<dbReference type="GO" id="GO:0046872">
    <property type="term" value="F:metal ion binding"/>
    <property type="evidence" value="ECO:0007669"/>
    <property type="project" value="UniProtKB-KW"/>
</dbReference>
<dbReference type="GO" id="GO:0009772">
    <property type="term" value="P:photosynthetic electron transport in photosystem II"/>
    <property type="evidence" value="ECO:0007669"/>
    <property type="project" value="InterPro"/>
</dbReference>
<dbReference type="FunFam" id="1.10.10.670:FF:000001">
    <property type="entry name" value="Photosystem II CP43 reaction center protein"/>
    <property type="match status" value="1"/>
</dbReference>
<dbReference type="Gene3D" id="1.10.10.670">
    <property type="entry name" value="photosystem ii from thermosynechococcus elongatus"/>
    <property type="match status" value="1"/>
</dbReference>
<dbReference type="HAMAP" id="MF_01496">
    <property type="entry name" value="PSII_PsbC_CP43"/>
    <property type="match status" value="1"/>
</dbReference>
<dbReference type="InterPro" id="IPR000932">
    <property type="entry name" value="PS_antenna-like"/>
</dbReference>
<dbReference type="InterPro" id="IPR036001">
    <property type="entry name" value="PS_II_antenna-like_sf"/>
</dbReference>
<dbReference type="InterPro" id="IPR005869">
    <property type="entry name" value="PSII_PsbC"/>
</dbReference>
<dbReference type="InterPro" id="IPR044900">
    <property type="entry name" value="PSII_PsbC_sf"/>
</dbReference>
<dbReference type="NCBIfam" id="TIGR01153">
    <property type="entry name" value="psbC"/>
    <property type="match status" value="1"/>
</dbReference>
<dbReference type="Pfam" id="PF00421">
    <property type="entry name" value="PSII"/>
    <property type="match status" value="1"/>
</dbReference>
<dbReference type="SUPFAM" id="SSF161077">
    <property type="entry name" value="Photosystem II antenna protein-like"/>
    <property type="match status" value="1"/>
</dbReference>
<gene>
    <name evidence="1" type="primary">psbC</name>
</gene>
<sequence length="473" mass="52075">MKILYSLRRFYHVETLFNGTFVLAGRDQETTGFAWWAGNARLINLSGKLLGAHVAHAGLIVFWAGAMNLFEVAHFVPEKPMYEQGLILLPHLATLGWGVGPGGEVLDTFPYFVSGVLHLISSAVLGFGGIYHALLGPETLEESFPFFGYVWKDRNKMTTILGIHLILLGLGAFLLVLKALYFGGVYDTWAPGGGDVRKITNLTLSPSVIFGYLLKSPFGGEGWIVSVDDLEDIIGGHVWLGFICVFGGIWHILTKPFAWARRAFVWSGEAYLSYSLAALSVFGFIACCFVWFNNTAYSSEFYGPTGPEASQAQAFTFLVRDQRLGANVGSAQGPTGLGKYLMRSPTGEVIFGGETMRFWDLRAPWLEPLRGPNGLDLSRLKKDIQPWQERRSAEYMTHAPLGSLNSVGGVATEINAVNYVSPRSWLSTSHFVLGFFPFVGHLWHAGRARAAAAGFEKGIDRDLEPVLYMNPLN</sequence>
<evidence type="ECO:0000255" key="1">
    <source>
        <dbReference type="HAMAP-Rule" id="MF_01496"/>
    </source>
</evidence>
<evidence type="ECO:0000269" key="2">
    <source>
    </source>
</evidence>
<evidence type="ECO:0000305" key="3"/>
<accession>P10804</accession>